<accession>Q9L6A3</accession>
<evidence type="ECO:0000255" key="1">
    <source>
        <dbReference type="HAMAP-Rule" id="MF_02207"/>
    </source>
</evidence>
<evidence type="ECO:0000305" key="2"/>
<comment type="function">
    <text evidence="1">Forms membrane-associated dynamic filaments that are essential for cell shape determination. Acts by regulating cell wall synthesis and cell elongation, and thus cell shape. A feedback loop between cell geometry and MreB localization may maintain elongated cell shape by targeting cell wall growth to regions of negative cell wall curvature.</text>
</comment>
<comment type="subunit">
    <text evidence="1">Forms polymers.</text>
</comment>
<comment type="subcellular location">
    <subcellularLocation>
        <location evidence="1">Cytoplasm</location>
    </subcellularLocation>
    <text evidence="1">Membrane-associated.</text>
</comment>
<comment type="similarity">
    <text evidence="1 2">Belongs to the FtsA/MreB family.</text>
</comment>
<feature type="chain" id="PRO_0000062762" description="Cell shape-determining protein MreB">
    <location>
        <begin position="1"/>
        <end position="351"/>
    </location>
</feature>
<feature type="binding site" evidence="1">
    <location>
        <begin position="20"/>
        <end position="22"/>
    </location>
    <ligand>
        <name>ATP</name>
        <dbReference type="ChEBI" id="CHEBI:30616"/>
    </ligand>
</feature>
<feature type="binding site" evidence="1">
    <location>
        <begin position="169"/>
        <end position="171"/>
    </location>
    <ligand>
        <name>ATP</name>
        <dbReference type="ChEBI" id="CHEBI:30616"/>
    </ligand>
</feature>
<feature type="binding site" evidence="1">
    <location>
        <begin position="217"/>
        <end position="220"/>
    </location>
    <ligand>
        <name>ATP</name>
        <dbReference type="ChEBI" id="CHEBI:30616"/>
    </ligand>
</feature>
<feature type="binding site" evidence="1">
    <location>
        <begin position="299"/>
        <end position="302"/>
    </location>
    <ligand>
        <name>ATP</name>
        <dbReference type="ChEBI" id="CHEBI:30616"/>
    </ligand>
</feature>
<protein>
    <recommendedName>
        <fullName evidence="1">Cell shape-determining protein MreB</fullName>
    </recommendedName>
</protein>
<gene>
    <name evidence="1" type="primary">mreB</name>
    <name type="ordered locus">PM1955</name>
</gene>
<name>MREB_PASMU</name>
<reference key="1">
    <citation type="journal article" date="2000" name="Microb. Pathog.">
        <title>Identification of Pasteurella multocida virulence genes in a septicemic mouse model using signature-tagged mutagenesis.</title>
        <authorList>
            <person name="Fuller T.E."/>
            <person name="Kennedy M.J."/>
            <person name="Lowery D.E."/>
        </authorList>
    </citation>
    <scope>NUCLEOTIDE SEQUENCE [GENOMIC DNA]</scope>
</reference>
<reference key="2">
    <citation type="journal article" date="2001" name="Proc. Natl. Acad. Sci. U.S.A.">
        <title>Complete genomic sequence of Pasteurella multocida Pm70.</title>
        <authorList>
            <person name="May B.J."/>
            <person name="Zhang Q."/>
            <person name="Li L.L."/>
            <person name="Paustian M.L."/>
            <person name="Whittam T.S."/>
            <person name="Kapur V."/>
        </authorList>
    </citation>
    <scope>NUCLEOTIDE SEQUENCE [LARGE SCALE GENOMIC DNA]</scope>
    <source>
        <strain>Pm70</strain>
    </source>
</reference>
<dbReference type="EMBL" id="AF237936">
    <property type="protein sequence ID" value="AAF68422.1"/>
    <property type="molecule type" value="Genomic_DNA"/>
</dbReference>
<dbReference type="EMBL" id="AE004439">
    <property type="protein sequence ID" value="AAK04039.1"/>
    <property type="molecule type" value="Genomic_DNA"/>
</dbReference>
<dbReference type="RefSeq" id="WP_005719450.1">
    <property type="nucleotide sequence ID" value="NC_002663.1"/>
</dbReference>
<dbReference type="SMR" id="Q9L6A3"/>
<dbReference type="STRING" id="272843.PM1955"/>
<dbReference type="EnsemblBacteria" id="AAK04039">
    <property type="protein sequence ID" value="AAK04039"/>
    <property type="gene ID" value="PM1955"/>
</dbReference>
<dbReference type="KEGG" id="pmu:PM1955"/>
<dbReference type="HOGENOM" id="CLU_052037_0_0_6"/>
<dbReference type="OrthoDB" id="9768127at2"/>
<dbReference type="Proteomes" id="UP000000809">
    <property type="component" value="Chromosome"/>
</dbReference>
<dbReference type="GO" id="GO:0005737">
    <property type="term" value="C:cytoplasm"/>
    <property type="evidence" value="ECO:0007669"/>
    <property type="project" value="UniProtKB-SubCell"/>
</dbReference>
<dbReference type="GO" id="GO:0005524">
    <property type="term" value="F:ATP binding"/>
    <property type="evidence" value="ECO:0007669"/>
    <property type="project" value="UniProtKB-KW"/>
</dbReference>
<dbReference type="GO" id="GO:0000902">
    <property type="term" value="P:cell morphogenesis"/>
    <property type="evidence" value="ECO:0007669"/>
    <property type="project" value="InterPro"/>
</dbReference>
<dbReference type="GO" id="GO:0008360">
    <property type="term" value="P:regulation of cell shape"/>
    <property type="evidence" value="ECO:0007669"/>
    <property type="project" value="UniProtKB-UniRule"/>
</dbReference>
<dbReference type="CDD" id="cd10225">
    <property type="entry name" value="ASKHA_NBD_MreB-like"/>
    <property type="match status" value="1"/>
</dbReference>
<dbReference type="FunFam" id="3.30.420.40:FF:000014">
    <property type="entry name" value="Rod shape-determining protein MreB"/>
    <property type="match status" value="1"/>
</dbReference>
<dbReference type="FunFam" id="3.30.420.40:FF:000016">
    <property type="entry name" value="Rod shape-determining protein mreB"/>
    <property type="match status" value="1"/>
</dbReference>
<dbReference type="Gene3D" id="3.30.420.40">
    <property type="match status" value="3"/>
</dbReference>
<dbReference type="HAMAP" id="MF_02207">
    <property type="entry name" value="MreB"/>
    <property type="match status" value="1"/>
</dbReference>
<dbReference type="InterPro" id="IPR043129">
    <property type="entry name" value="ATPase_NBD"/>
</dbReference>
<dbReference type="InterPro" id="IPR004753">
    <property type="entry name" value="MreB"/>
</dbReference>
<dbReference type="InterPro" id="IPR056546">
    <property type="entry name" value="MreB_MamK-like"/>
</dbReference>
<dbReference type="NCBIfam" id="TIGR00904">
    <property type="entry name" value="mreB"/>
    <property type="match status" value="1"/>
</dbReference>
<dbReference type="NCBIfam" id="NF010539">
    <property type="entry name" value="PRK13927.1"/>
    <property type="match status" value="1"/>
</dbReference>
<dbReference type="PANTHER" id="PTHR42749">
    <property type="entry name" value="CELL SHAPE-DETERMINING PROTEIN MREB"/>
    <property type="match status" value="1"/>
</dbReference>
<dbReference type="PANTHER" id="PTHR42749:SF1">
    <property type="entry name" value="CELL SHAPE-DETERMINING PROTEIN MREB"/>
    <property type="match status" value="1"/>
</dbReference>
<dbReference type="Pfam" id="PF06723">
    <property type="entry name" value="MreB_Mbl"/>
    <property type="match status" value="1"/>
</dbReference>
<dbReference type="PRINTS" id="PR01652">
    <property type="entry name" value="SHAPEPROTEIN"/>
</dbReference>
<dbReference type="SUPFAM" id="SSF53067">
    <property type="entry name" value="Actin-like ATPase domain"/>
    <property type="match status" value="2"/>
</dbReference>
<sequence>MLFKKIRGLFSNDLSIDLGTANTLIYVKGQGIVLDEPSVVAIRQERSGALKSIAAVGRDAKLMLGRTPKSIAAIRPMKDGVIADFFVTEKMLQYFIKQVHSSNFMRPSPRVLVCVPAGATQVERRAIKESAIGAGAREVYLIEEPMAAAIGAKLPVSTATGSMVIDIGGGTTEVAVISLNGIVYSSSVRIGGDRFDEAIISYVRKTFGSIIGEPTAERIKQEIGSAFIQEGDEVREIEVHGHNLAEGAPRSFKLTSRDVLEAIQAPLNGIVAAVRTALEECQPEHAADIFERGMVLTGGGALIRNIDVLLSKETGVPVIIADDPLTCVARGGGEALEMIDMHGGDIFSDDI</sequence>
<keyword id="KW-0067">ATP-binding</keyword>
<keyword id="KW-0133">Cell shape</keyword>
<keyword id="KW-0963">Cytoplasm</keyword>
<keyword id="KW-0547">Nucleotide-binding</keyword>
<keyword id="KW-1185">Reference proteome</keyword>
<organism>
    <name type="scientific">Pasteurella multocida (strain Pm70)</name>
    <dbReference type="NCBI Taxonomy" id="272843"/>
    <lineage>
        <taxon>Bacteria</taxon>
        <taxon>Pseudomonadati</taxon>
        <taxon>Pseudomonadota</taxon>
        <taxon>Gammaproteobacteria</taxon>
        <taxon>Pasteurellales</taxon>
        <taxon>Pasteurellaceae</taxon>
        <taxon>Pasteurella</taxon>
    </lineage>
</organism>
<proteinExistence type="inferred from homology"/>